<sequence length="245" mass="27030">MPGRWSAETRLALVRRARRMNRALAQAFPHVYCELDFTTPLELAVATILSAQSTDKRVNLTTPALFARYRTARDYAQADRTELESLIRPTGFYRNKAASLIGLGQALVERFGGEVPATMDKLVTLPGVGRKTANVILGNAFGIPGITVDTHFGRLVRRWRWTTAEDPVKVEQAVGELIERKEWTLLSHRVIFHGRRVCHARRPACGVCVLAKDCPSFGLGPTEPLLAAPLVQGPETDHLLALAGL</sequence>
<comment type="function">
    <text evidence="1 2">DNA repair enzyme that has both DNA N-glycosylase activity and AP-lyase activity. The DNA N-glycosylase activity releases various damaged pyrimidines from DNA by cleaving the N-glycosidic bond, leaving an AP (apurinic/apyrimidinic) site. The AP-lyase activity cleaves the phosphodiester bond 3' to the AP site by a beta-elimination, leaving a 3'-terminal unsaturated sugar and a product with a terminal 5'-phosphate. Has a preference for oxidized pyrimidines, such as thymine glycol (prefers 5S isomers) 5,6-dihydrouracil:G, 5-hydroxyuracil:G, 5-hydroxycytosine:G and urea:A. Cleaves ssDNA containing an AP site.</text>
</comment>
<comment type="catalytic activity">
    <reaction evidence="1">
        <text>2'-deoxyribonucleotide-(2'-deoxyribose 5'-phosphate)-2'-deoxyribonucleotide-DNA = a 3'-end 2'-deoxyribonucleotide-(2,3-dehydro-2,3-deoxyribose 5'-phosphate)-DNA + a 5'-end 5'-phospho-2'-deoxyribonucleoside-DNA + H(+)</text>
        <dbReference type="Rhea" id="RHEA:66592"/>
        <dbReference type="Rhea" id="RHEA-COMP:13180"/>
        <dbReference type="Rhea" id="RHEA-COMP:16897"/>
        <dbReference type="Rhea" id="RHEA-COMP:17067"/>
        <dbReference type="ChEBI" id="CHEBI:15378"/>
        <dbReference type="ChEBI" id="CHEBI:136412"/>
        <dbReference type="ChEBI" id="CHEBI:157695"/>
        <dbReference type="ChEBI" id="CHEBI:167181"/>
        <dbReference type="EC" id="4.2.99.18"/>
    </reaction>
</comment>
<comment type="cofactor">
    <cofactor evidence="1">
        <name>[4Fe-4S] cluster</name>
        <dbReference type="ChEBI" id="CHEBI:49883"/>
    </cofactor>
    <text evidence="1">Binds 1 [4Fe-4S] cluster.</text>
</comment>
<comment type="similarity">
    <text evidence="1">Belongs to the Nth/MutY family.</text>
</comment>
<keyword id="KW-0004">4Fe-4S</keyword>
<keyword id="KW-0227">DNA damage</keyword>
<keyword id="KW-0234">DNA repair</keyword>
<keyword id="KW-0238">DNA-binding</keyword>
<keyword id="KW-0326">Glycosidase</keyword>
<keyword id="KW-0378">Hydrolase</keyword>
<keyword id="KW-0408">Iron</keyword>
<keyword id="KW-0411">Iron-sulfur</keyword>
<keyword id="KW-0456">Lyase</keyword>
<keyword id="KW-0479">Metal-binding</keyword>
<keyword id="KW-0511">Multifunctional enzyme</keyword>
<keyword id="KW-1185">Reference proteome</keyword>
<dbReference type="EC" id="4.2.99.18" evidence="1"/>
<dbReference type="EMBL" id="AL123456">
    <property type="protein sequence ID" value="CCP46497.1"/>
    <property type="molecule type" value="Genomic_DNA"/>
</dbReference>
<dbReference type="PIR" id="C70790">
    <property type="entry name" value="C70790"/>
</dbReference>
<dbReference type="RefSeq" id="NP_218191.2">
    <property type="nucleotide sequence ID" value="NC_000962.3"/>
</dbReference>
<dbReference type="RefSeq" id="WP_003419724.1">
    <property type="nucleotide sequence ID" value="NZ_NVQJ01000028.1"/>
</dbReference>
<dbReference type="SMR" id="P9WQ11"/>
<dbReference type="FunCoup" id="P9WQ11">
    <property type="interactions" value="230"/>
</dbReference>
<dbReference type="STRING" id="83332.Rv3674c"/>
<dbReference type="PaxDb" id="83332-Rv3674c"/>
<dbReference type="DNASU" id="885058"/>
<dbReference type="GeneID" id="45427669"/>
<dbReference type="GeneID" id="885058"/>
<dbReference type="KEGG" id="mtu:Rv3674c"/>
<dbReference type="KEGG" id="mtv:RVBD_3674c"/>
<dbReference type="PATRIC" id="fig|83332.111.peg.4085"/>
<dbReference type="TubercuList" id="Rv3674c"/>
<dbReference type="eggNOG" id="COG0177">
    <property type="taxonomic scope" value="Bacteria"/>
</dbReference>
<dbReference type="InParanoid" id="P9WQ11"/>
<dbReference type="OrthoDB" id="9800977at2"/>
<dbReference type="PhylomeDB" id="P9WQ11"/>
<dbReference type="Proteomes" id="UP000001584">
    <property type="component" value="Chromosome"/>
</dbReference>
<dbReference type="GO" id="GO:0009274">
    <property type="term" value="C:peptidoglycan-based cell wall"/>
    <property type="evidence" value="ECO:0007005"/>
    <property type="project" value="MTBBASE"/>
</dbReference>
<dbReference type="GO" id="GO:0005886">
    <property type="term" value="C:plasma membrane"/>
    <property type="evidence" value="ECO:0007005"/>
    <property type="project" value="MTBBASE"/>
</dbReference>
<dbReference type="GO" id="GO:0051539">
    <property type="term" value="F:4 iron, 4 sulfur cluster binding"/>
    <property type="evidence" value="ECO:0007669"/>
    <property type="project" value="UniProtKB-UniRule"/>
</dbReference>
<dbReference type="GO" id="GO:0140078">
    <property type="term" value="F:class I DNA-(apurinic or apyrimidinic site) endonuclease activity"/>
    <property type="evidence" value="ECO:0007669"/>
    <property type="project" value="UniProtKB-EC"/>
</dbReference>
<dbReference type="GO" id="GO:0019104">
    <property type="term" value="F:DNA N-glycosylase activity"/>
    <property type="evidence" value="ECO:0000314"/>
    <property type="project" value="MTBBASE"/>
</dbReference>
<dbReference type="GO" id="GO:0003690">
    <property type="term" value="F:double-stranded DNA binding"/>
    <property type="evidence" value="ECO:0000314"/>
    <property type="project" value="MTBBASE"/>
</dbReference>
<dbReference type="GO" id="GO:0046872">
    <property type="term" value="F:metal ion binding"/>
    <property type="evidence" value="ECO:0007669"/>
    <property type="project" value="UniProtKB-KW"/>
</dbReference>
<dbReference type="GO" id="GO:0006285">
    <property type="term" value="P:base-excision repair, AP site formation"/>
    <property type="evidence" value="ECO:0000318"/>
    <property type="project" value="GO_Central"/>
</dbReference>
<dbReference type="GO" id="GO:0006281">
    <property type="term" value="P:DNA repair"/>
    <property type="evidence" value="ECO:0000314"/>
    <property type="project" value="MTBBASE"/>
</dbReference>
<dbReference type="CDD" id="cd00056">
    <property type="entry name" value="ENDO3c"/>
    <property type="match status" value="1"/>
</dbReference>
<dbReference type="FunFam" id="1.10.1670.10:FF:000001">
    <property type="entry name" value="Endonuclease III"/>
    <property type="match status" value="1"/>
</dbReference>
<dbReference type="FunFam" id="1.10.340.30:FF:000001">
    <property type="entry name" value="Endonuclease III"/>
    <property type="match status" value="1"/>
</dbReference>
<dbReference type="Gene3D" id="1.10.1670.10">
    <property type="entry name" value="Helix-hairpin-Helix base-excision DNA repair enzymes (C-terminal)"/>
    <property type="match status" value="1"/>
</dbReference>
<dbReference type="Gene3D" id="1.10.340.30">
    <property type="entry name" value="Hypothetical protein, domain 2"/>
    <property type="match status" value="1"/>
</dbReference>
<dbReference type="HAMAP" id="MF_00942">
    <property type="entry name" value="Nth"/>
    <property type="match status" value="1"/>
</dbReference>
<dbReference type="InterPro" id="IPR011257">
    <property type="entry name" value="DNA_glycosylase"/>
</dbReference>
<dbReference type="InterPro" id="IPR004036">
    <property type="entry name" value="Endonuclease-III-like_CS2"/>
</dbReference>
<dbReference type="InterPro" id="IPR003651">
    <property type="entry name" value="Endonuclease3_FeS-loop_motif"/>
</dbReference>
<dbReference type="InterPro" id="IPR004035">
    <property type="entry name" value="Endouclease-III_FeS-bd_BS"/>
</dbReference>
<dbReference type="InterPro" id="IPR003265">
    <property type="entry name" value="HhH-GPD_domain"/>
</dbReference>
<dbReference type="InterPro" id="IPR023170">
    <property type="entry name" value="HhH_base_excis_C"/>
</dbReference>
<dbReference type="InterPro" id="IPR000445">
    <property type="entry name" value="HhH_motif"/>
</dbReference>
<dbReference type="InterPro" id="IPR005759">
    <property type="entry name" value="Nth"/>
</dbReference>
<dbReference type="NCBIfam" id="TIGR01083">
    <property type="entry name" value="nth"/>
    <property type="match status" value="1"/>
</dbReference>
<dbReference type="PANTHER" id="PTHR10359">
    <property type="entry name" value="A/G-SPECIFIC ADENINE GLYCOSYLASE/ENDONUCLEASE III"/>
    <property type="match status" value="1"/>
</dbReference>
<dbReference type="PANTHER" id="PTHR10359:SF18">
    <property type="entry name" value="ENDONUCLEASE III"/>
    <property type="match status" value="1"/>
</dbReference>
<dbReference type="Pfam" id="PF10576">
    <property type="entry name" value="EndIII_4Fe-2S"/>
    <property type="match status" value="1"/>
</dbReference>
<dbReference type="Pfam" id="PF00633">
    <property type="entry name" value="HHH"/>
    <property type="match status" value="1"/>
</dbReference>
<dbReference type="Pfam" id="PF00730">
    <property type="entry name" value="HhH-GPD"/>
    <property type="match status" value="1"/>
</dbReference>
<dbReference type="SMART" id="SM00478">
    <property type="entry name" value="ENDO3c"/>
    <property type="match status" value="1"/>
</dbReference>
<dbReference type="SMART" id="SM00525">
    <property type="entry name" value="FES"/>
    <property type="match status" value="1"/>
</dbReference>
<dbReference type="SUPFAM" id="SSF48150">
    <property type="entry name" value="DNA-glycosylase"/>
    <property type="match status" value="1"/>
</dbReference>
<dbReference type="PROSITE" id="PS00764">
    <property type="entry name" value="ENDONUCLEASE_III_1"/>
    <property type="match status" value="1"/>
</dbReference>
<dbReference type="PROSITE" id="PS01155">
    <property type="entry name" value="ENDONUCLEASE_III_2"/>
    <property type="match status" value="1"/>
</dbReference>
<evidence type="ECO:0000255" key="1">
    <source>
        <dbReference type="HAMAP-Rule" id="MF_00942"/>
    </source>
</evidence>
<evidence type="ECO:0000269" key="2">
    <source>
    </source>
</evidence>
<gene>
    <name evidence="1" type="primary">nth</name>
    <name type="ordered locus">Rv3674c</name>
    <name type="ORF">MTV025.022c</name>
</gene>
<name>END3_MYCTU</name>
<proteinExistence type="evidence at protein level"/>
<organism>
    <name type="scientific">Mycobacterium tuberculosis (strain ATCC 25618 / H37Rv)</name>
    <dbReference type="NCBI Taxonomy" id="83332"/>
    <lineage>
        <taxon>Bacteria</taxon>
        <taxon>Bacillati</taxon>
        <taxon>Actinomycetota</taxon>
        <taxon>Actinomycetes</taxon>
        <taxon>Mycobacteriales</taxon>
        <taxon>Mycobacteriaceae</taxon>
        <taxon>Mycobacterium</taxon>
        <taxon>Mycobacterium tuberculosis complex</taxon>
    </lineage>
</organism>
<feature type="chain" id="PRO_0000102219" description="Endonuclease III">
    <location>
        <begin position="1"/>
        <end position="245"/>
    </location>
</feature>
<feature type="domain" description="HhH" evidence="1">
    <location>
        <begin position="119"/>
        <end position="138"/>
    </location>
</feature>
<feature type="binding site" evidence="1">
    <location>
        <position position="198"/>
    </location>
    <ligand>
        <name>[4Fe-4S] cluster</name>
        <dbReference type="ChEBI" id="CHEBI:49883"/>
    </ligand>
</feature>
<feature type="binding site" evidence="1">
    <location>
        <position position="205"/>
    </location>
    <ligand>
        <name>[4Fe-4S] cluster</name>
        <dbReference type="ChEBI" id="CHEBI:49883"/>
    </ligand>
</feature>
<feature type="binding site" evidence="1">
    <location>
        <position position="208"/>
    </location>
    <ligand>
        <name>[4Fe-4S] cluster</name>
        <dbReference type="ChEBI" id="CHEBI:49883"/>
    </ligand>
</feature>
<feature type="binding site" evidence="1">
    <location>
        <position position="214"/>
    </location>
    <ligand>
        <name>[4Fe-4S] cluster</name>
        <dbReference type="ChEBI" id="CHEBI:49883"/>
    </ligand>
</feature>
<protein>
    <recommendedName>
        <fullName evidence="1">Endonuclease III</fullName>
        <ecNumber evidence="1">4.2.99.18</ecNumber>
    </recommendedName>
    <alternativeName>
        <fullName evidence="1">DNA-(apurinic or apyrimidinic site) lyase</fullName>
    </alternativeName>
</protein>
<accession>P9WQ11</accession>
<accession>L0TEW4</accession>
<accession>O69642</accession>
<accession>P63540</accession>
<reference key="1">
    <citation type="journal article" date="1998" name="Nature">
        <title>Deciphering the biology of Mycobacterium tuberculosis from the complete genome sequence.</title>
        <authorList>
            <person name="Cole S.T."/>
            <person name="Brosch R."/>
            <person name="Parkhill J."/>
            <person name="Garnier T."/>
            <person name="Churcher C.M."/>
            <person name="Harris D.E."/>
            <person name="Gordon S.V."/>
            <person name="Eiglmeier K."/>
            <person name="Gas S."/>
            <person name="Barry C.E. III"/>
            <person name="Tekaia F."/>
            <person name="Badcock K."/>
            <person name="Basham D."/>
            <person name="Brown D."/>
            <person name="Chillingworth T."/>
            <person name="Connor R."/>
            <person name="Davies R.M."/>
            <person name="Devlin K."/>
            <person name="Feltwell T."/>
            <person name="Gentles S."/>
            <person name="Hamlin N."/>
            <person name="Holroyd S."/>
            <person name="Hornsby T."/>
            <person name="Jagels K."/>
            <person name="Krogh A."/>
            <person name="McLean J."/>
            <person name="Moule S."/>
            <person name="Murphy L.D."/>
            <person name="Oliver S."/>
            <person name="Osborne J."/>
            <person name="Quail M.A."/>
            <person name="Rajandream M.A."/>
            <person name="Rogers J."/>
            <person name="Rutter S."/>
            <person name="Seeger K."/>
            <person name="Skelton S."/>
            <person name="Squares S."/>
            <person name="Squares R."/>
            <person name="Sulston J.E."/>
            <person name="Taylor K."/>
            <person name="Whitehead S."/>
            <person name="Barrell B.G."/>
        </authorList>
    </citation>
    <scope>NUCLEOTIDE SEQUENCE [LARGE SCALE GENOMIC DNA]</scope>
    <source>
        <strain>ATCC 25618 / H37Rv</strain>
    </source>
</reference>
<reference key="2">
    <citation type="journal article" date="2010" name="DNA Repair">
        <title>The oxidative DNA glycosylases of Mycobacterium tuberculosis exhibit different substrate preferences from their Escherichia coli counterparts.</title>
        <authorList>
            <person name="Guo Y."/>
            <person name="Bandaru V."/>
            <person name="Jaruga P."/>
            <person name="Zhao X."/>
            <person name="Burrows C.J."/>
            <person name="Iwai S."/>
            <person name="Dizdaroglu M."/>
            <person name="Bond J.P."/>
            <person name="Wallace S.S."/>
        </authorList>
    </citation>
    <scope>FUNCTION</scope>
    <source>
        <strain>ATCC 25618 / H37Rv</strain>
    </source>
</reference>
<reference key="3">
    <citation type="journal article" date="2011" name="Mol. Cell. Proteomics">
        <title>Proteogenomic analysis of Mycobacterium tuberculosis by high resolution mass spectrometry.</title>
        <authorList>
            <person name="Kelkar D.S."/>
            <person name="Kumar D."/>
            <person name="Kumar P."/>
            <person name="Balakrishnan L."/>
            <person name="Muthusamy B."/>
            <person name="Yadav A.K."/>
            <person name="Shrivastava P."/>
            <person name="Marimuthu A."/>
            <person name="Anand S."/>
            <person name="Sundaram H."/>
            <person name="Kingsbury R."/>
            <person name="Harsha H.C."/>
            <person name="Nair B."/>
            <person name="Prasad T.S."/>
            <person name="Chauhan D.S."/>
            <person name="Katoch K."/>
            <person name="Katoch V.M."/>
            <person name="Kumar P."/>
            <person name="Chaerkady R."/>
            <person name="Ramachandran S."/>
            <person name="Dash D."/>
            <person name="Pandey A."/>
        </authorList>
    </citation>
    <scope>IDENTIFICATION BY MASS SPECTROMETRY [LARGE SCALE ANALYSIS]</scope>
    <source>
        <strain>ATCC 25618 / H37Rv</strain>
    </source>
</reference>
<reference key="4">
    <citation type="journal article" date="2011" name="Tuberculosis">
        <title>Base excision and nucleotide excision repair pathways in mycobacteria.</title>
        <authorList>
            <person name="Kurthkoti K."/>
            <person name="Varshney U."/>
        </authorList>
    </citation>
    <scope>REVIEW</scope>
</reference>